<comment type="similarity">
    <text evidence="1">Belongs to the bacterial ribosomal protein bS16 family.</text>
</comment>
<proteinExistence type="inferred from homology"/>
<gene>
    <name evidence="1" type="primary">rpsP</name>
    <name type="ordered locus">Adeh_1916</name>
</gene>
<dbReference type="EMBL" id="CP000251">
    <property type="protein sequence ID" value="ABC81687.1"/>
    <property type="molecule type" value="Genomic_DNA"/>
</dbReference>
<dbReference type="RefSeq" id="WP_011420970.1">
    <property type="nucleotide sequence ID" value="NC_007760.1"/>
</dbReference>
<dbReference type="SMR" id="Q2IJ60"/>
<dbReference type="STRING" id="290397.Adeh_1916"/>
<dbReference type="KEGG" id="ade:Adeh_1916"/>
<dbReference type="eggNOG" id="COG0228">
    <property type="taxonomic scope" value="Bacteria"/>
</dbReference>
<dbReference type="HOGENOM" id="CLU_100590_5_1_7"/>
<dbReference type="OrthoDB" id="9807878at2"/>
<dbReference type="Proteomes" id="UP000001935">
    <property type="component" value="Chromosome"/>
</dbReference>
<dbReference type="GO" id="GO:0005737">
    <property type="term" value="C:cytoplasm"/>
    <property type="evidence" value="ECO:0007669"/>
    <property type="project" value="UniProtKB-ARBA"/>
</dbReference>
<dbReference type="GO" id="GO:0015935">
    <property type="term" value="C:small ribosomal subunit"/>
    <property type="evidence" value="ECO:0007669"/>
    <property type="project" value="TreeGrafter"/>
</dbReference>
<dbReference type="GO" id="GO:0003735">
    <property type="term" value="F:structural constituent of ribosome"/>
    <property type="evidence" value="ECO:0007669"/>
    <property type="project" value="InterPro"/>
</dbReference>
<dbReference type="GO" id="GO:0006412">
    <property type="term" value="P:translation"/>
    <property type="evidence" value="ECO:0007669"/>
    <property type="project" value="UniProtKB-UniRule"/>
</dbReference>
<dbReference type="Gene3D" id="3.30.1320.10">
    <property type="match status" value="1"/>
</dbReference>
<dbReference type="HAMAP" id="MF_00385">
    <property type="entry name" value="Ribosomal_bS16"/>
    <property type="match status" value="1"/>
</dbReference>
<dbReference type="InterPro" id="IPR000307">
    <property type="entry name" value="Ribosomal_bS16"/>
</dbReference>
<dbReference type="InterPro" id="IPR023803">
    <property type="entry name" value="Ribosomal_bS16_dom_sf"/>
</dbReference>
<dbReference type="NCBIfam" id="TIGR00002">
    <property type="entry name" value="S16"/>
    <property type="match status" value="1"/>
</dbReference>
<dbReference type="PANTHER" id="PTHR12919">
    <property type="entry name" value="30S RIBOSOMAL PROTEIN S16"/>
    <property type="match status" value="1"/>
</dbReference>
<dbReference type="PANTHER" id="PTHR12919:SF20">
    <property type="entry name" value="SMALL RIBOSOMAL SUBUNIT PROTEIN BS16M"/>
    <property type="match status" value="1"/>
</dbReference>
<dbReference type="Pfam" id="PF00886">
    <property type="entry name" value="Ribosomal_S16"/>
    <property type="match status" value="1"/>
</dbReference>
<dbReference type="SUPFAM" id="SSF54565">
    <property type="entry name" value="Ribosomal protein S16"/>
    <property type="match status" value="1"/>
</dbReference>
<organism>
    <name type="scientific">Anaeromyxobacter dehalogenans (strain 2CP-C)</name>
    <dbReference type="NCBI Taxonomy" id="290397"/>
    <lineage>
        <taxon>Bacteria</taxon>
        <taxon>Pseudomonadati</taxon>
        <taxon>Myxococcota</taxon>
        <taxon>Myxococcia</taxon>
        <taxon>Myxococcales</taxon>
        <taxon>Cystobacterineae</taxon>
        <taxon>Anaeromyxobacteraceae</taxon>
        <taxon>Anaeromyxobacter</taxon>
    </lineage>
</organism>
<keyword id="KW-1185">Reference proteome</keyword>
<keyword id="KW-0687">Ribonucleoprotein</keyword>
<keyword id="KW-0689">Ribosomal protein</keyword>
<feature type="chain" id="PRO_0000243767" description="Small ribosomal subunit protein bS16">
    <location>
        <begin position="1"/>
        <end position="88"/>
    </location>
</feature>
<reference key="1">
    <citation type="submission" date="2006-01" db="EMBL/GenBank/DDBJ databases">
        <title>Complete sequence of Anaeromyxobacter dehalogenans 2CP-C.</title>
        <authorList>
            <person name="Copeland A."/>
            <person name="Lucas S."/>
            <person name="Lapidus A."/>
            <person name="Barry K."/>
            <person name="Detter J.C."/>
            <person name="Glavina T."/>
            <person name="Hammon N."/>
            <person name="Israni S."/>
            <person name="Pitluck S."/>
            <person name="Brettin T."/>
            <person name="Bruce D."/>
            <person name="Han C."/>
            <person name="Tapia R."/>
            <person name="Gilna P."/>
            <person name="Kiss H."/>
            <person name="Schmutz J."/>
            <person name="Larimer F."/>
            <person name="Land M."/>
            <person name="Kyrpides N."/>
            <person name="Anderson I."/>
            <person name="Sanford R.A."/>
            <person name="Ritalahti K.M."/>
            <person name="Thomas H.S."/>
            <person name="Kirby J.R."/>
            <person name="Zhulin I.B."/>
            <person name="Loeffler F.E."/>
            <person name="Richardson P."/>
        </authorList>
    </citation>
    <scope>NUCLEOTIDE SEQUENCE [LARGE SCALE GENOMIC DNA]</scope>
    <source>
        <strain>2CP-C</strain>
    </source>
</reference>
<protein>
    <recommendedName>
        <fullName evidence="1">Small ribosomal subunit protein bS16</fullName>
    </recommendedName>
    <alternativeName>
        <fullName evidence="2">30S ribosomal protein S16</fullName>
    </alternativeName>
</protein>
<sequence length="88" mass="9705">MAVVLRLSRAGTHKAPFYHVVATDSRNARDGKYLEDVGIYDPTKRPERIELKVERIEHWLKAGAKPSQTVAMILKRAAKAAAPAAPKA</sequence>
<evidence type="ECO:0000255" key="1">
    <source>
        <dbReference type="HAMAP-Rule" id="MF_00385"/>
    </source>
</evidence>
<evidence type="ECO:0000305" key="2"/>
<accession>Q2IJ60</accession>
<name>RS16_ANADE</name>